<protein>
    <recommendedName>
        <fullName>Virion protein US10 homolog</fullName>
    </recommendedName>
</protein>
<comment type="subcellular location">
    <subcellularLocation>
        <location>Virion tegument</location>
    </subcellularLocation>
    <subcellularLocation>
        <location evidence="1">Host nucleus matrix</location>
    </subcellularLocation>
</comment>
<comment type="induction">
    <text>Expressed late in the infection cycle.</text>
</comment>
<comment type="PTM">
    <text evidence="1">Phosphorylated.</text>
</comment>
<comment type="similarity">
    <text evidence="3">Belongs to the herpesviridae US10 family.</text>
</comment>
<name>US10_PSHV1</name>
<organism>
    <name type="scientific">Psittacid herpesvirus 1 (isolate Amazon parrot/-/97-0001/1997)</name>
    <name type="common">PsHV-1</name>
    <name type="synonym">Pacheco's disease virus</name>
    <dbReference type="NCBI Taxonomy" id="670426"/>
    <lineage>
        <taxon>Viruses</taxon>
        <taxon>Duplodnaviria</taxon>
        <taxon>Heunggongvirae</taxon>
        <taxon>Peploviricota</taxon>
        <taxon>Herviviricetes</taxon>
        <taxon>Herpesvirales</taxon>
        <taxon>Orthoherpesviridae</taxon>
        <taxon>Alphaherpesvirinae</taxon>
        <taxon>Iltovirus</taxon>
        <taxon>Iltovirus psittacidalpha1</taxon>
        <taxon>Psittacid alphaherpesvirus 1</taxon>
    </lineage>
</organism>
<organismHost>
    <name type="scientific">Amazona oratrix</name>
    <name type="common">yellow-headed parrot</name>
    <dbReference type="NCBI Taxonomy" id="152276"/>
</organismHost>
<gene>
    <name type="primary">US10</name>
</gene>
<reference key="1">
    <citation type="journal article" date="2006" name="J. Virol.">
        <title>Psittacid herpesvirus 1 and infectious laryngotracheitis virus: Comparative genome sequence analysis of two avian alphaherpesviruses.</title>
        <authorList>
            <person name="Thureen D.R."/>
            <person name="Keeler C.L. Jr."/>
        </authorList>
    </citation>
    <scope>NUCLEOTIDE SEQUENCE [LARGE SCALE GENOMIC DNA]</scope>
</reference>
<accession>Q6UDG2</accession>
<proteinExistence type="evidence at transcript level"/>
<evidence type="ECO:0000250" key="1"/>
<evidence type="ECO:0000256" key="2">
    <source>
        <dbReference type="SAM" id="MobiDB-lite"/>
    </source>
</evidence>
<evidence type="ECO:0000305" key="3"/>
<feature type="chain" id="PRO_0000406827" description="Virion protein US10 homolog">
    <location>
        <begin position="1"/>
        <end position="281"/>
    </location>
</feature>
<feature type="region of interest" description="Disordered" evidence="2">
    <location>
        <begin position="90"/>
        <end position="119"/>
    </location>
</feature>
<feature type="region of interest" description="Disordered" evidence="2">
    <location>
        <begin position="136"/>
        <end position="186"/>
    </location>
</feature>
<feature type="compositionally biased region" description="Basic and acidic residues" evidence="2">
    <location>
        <begin position="97"/>
        <end position="119"/>
    </location>
</feature>
<keyword id="KW-1048">Host nucleus</keyword>
<keyword id="KW-0426">Late protein</keyword>
<keyword id="KW-1185">Reference proteome</keyword>
<keyword id="KW-0946">Virion</keyword>
<keyword id="KW-0920">Virion tegument</keyword>
<sequence>MRPLSRLHFPRGSLPLCPYSGSSAEAEAYQRLRGVRAASELWCELHDLAEHLLPIVSKRGRRPDDEAGRSLMLRNAADRLRASFVRAVELSKPSADAQDKGRSDGAGDKQKGGDAARDGGEMAGLSQLLFLPSPALHRPPIRVGPTEDCLNSDMTSSDAAVPHAYGSSSSSSDEAGVPGRRRSRRRRCVHAWRKENVEARARAQSNNLRAAVSAVLLDRWLPIGDARNTCTPPGELEERLLAAVLAAAHWCCLWHDSPCGAGSLYADIYAEDIFATGAPQR</sequence>
<dbReference type="EMBL" id="AY372243">
    <property type="protein sequence ID" value="AAQ73748.1"/>
    <property type="molecule type" value="Genomic_DNA"/>
</dbReference>
<dbReference type="RefSeq" id="NP_944442.1">
    <property type="nucleotide sequence ID" value="NC_005264.1"/>
</dbReference>
<dbReference type="SMR" id="Q6UDG2"/>
<dbReference type="GeneID" id="2657006"/>
<dbReference type="KEGG" id="vg:2657006"/>
<dbReference type="Proteomes" id="UP000006840">
    <property type="component" value="Segment"/>
</dbReference>
<dbReference type="GO" id="GO:0044204">
    <property type="term" value="C:host cell nuclear matrix"/>
    <property type="evidence" value="ECO:0007669"/>
    <property type="project" value="UniProtKB-SubCell"/>
</dbReference>
<dbReference type="GO" id="GO:0019033">
    <property type="term" value="C:viral tegument"/>
    <property type="evidence" value="ECO:0007669"/>
    <property type="project" value="UniProtKB-SubCell"/>
</dbReference>
<dbReference type="GO" id="GO:0008270">
    <property type="term" value="F:zinc ion binding"/>
    <property type="evidence" value="ECO:0007669"/>
    <property type="project" value="InterPro"/>
</dbReference>
<dbReference type="InterPro" id="IPR000714">
    <property type="entry name" value="EHV_Unk"/>
</dbReference>
<dbReference type="Pfam" id="PF02053">
    <property type="entry name" value="Gene66"/>
    <property type="match status" value="1"/>
</dbReference>